<reference key="1">
    <citation type="journal article" date="2005" name="Nucleic Acids Res.">
        <title>Genome dynamics and diversity of Shigella species, the etiologic agents of bacillary dysentery.</title>
        <authorList>
            <person name="Yang F."/>
            <person name="Yang J."/>
            <person name="Zhang X."/>
            <person name="Chen L."/>
            <person name="Jiang Y."/>
            <person name="Yan Y."/>
            <person name="Tang X."/>
            <person name="Wang J."/>
            <person name="Xiong Z."/>
            <person name="Dong J."/>
            <person name="Xue Y."/>
            <person name="Zhu Y."/>
            <person name="Xu X."/>
            <person name="Sun L."/>
            <person name="Chen S."/>
            <person name="Nie H."/>
            <person name="Peng J."/>
            <person name="Xu J."/>
            <person name="Wang Y."/>
            <person name="Yuan Z."/>
            <person name="Wen Y."/>
            <person name="Yao Z."/>
            <person name="Shen Y."/>
            <person name="Qiang B."/>
            <person name="Hou Y."/>
            <person name="Yu J."/>
            <person name="Jin Q."/>
        </authorList>
    </citation>
    <scope>NUCLEOTIDE SEQUENCE [LARGE SCALE GENOMIC DNA]</scope>
    <source>
        <strain>Ss046</strain>
    </source>
</reference>
<dbReference type="EMBL" id="CP000038">
    <property type="protein sequence ID" value="AAZ86976.1"/>
    <property type="molecule type" value="Genomic_DNA"/>
</dbReference>
<dbReference type="RefSeq" id="WP_000622418.1">
    <property type="nucleotide sequence ID" value="NC_007384.1"/>
</dbReference>
<dbReference type="SMR" id="Q3Z5I6"/>
<dbReference type="GeneID" id="93777253"/>
<dbReference type="KEGG" id="ssn:SSON_0184"/>
<dbReference type="HOGENOM" id="CLU_073981_2_1_6"/>
<dbReference type="Proteomes" id="UP000002529">
    <property type="component" value="Chromosome"/>
</dbReference>
<dbReference type="GO" id="GO:0005829">
    <property type="term" value="C:cytosol"/>
    <property type="evidence" value="ECO:0007669"/>
    <property type="project" value="GOC"/>
</dbReference>
<dbReference type="GO" id="GO:0043023">
    <property type="term" value="F:ribosomal large subunit binding"/>
    <property type="evidence" value="ECO:0007669"/>
    <property type="project" value="TreeGrafter"/>
</dbReference>
<dbReference type="GO" id="GO:0002184">
    <property type="term" value="P:cytoplasmic translational termination"/>
    <property type="evidence" value="ECO:0007669"/>
    <property type="project" value="TreeGrafter"/>
</dbReference>
<dbReference type="CDD" id="cd00520">
    <property type="entry name" value="RRF"/>
    <property type="match status" value="1"/>
</dbReference>
<dbReference type="FunFam" id="1.10.132.20:FF:000001">
    <property type="entry name" value="Ribosome-recycling factor"/>
    <property type="match status" value="1"/>
</dbReference>
<dbReference type="FunFam" id="3.30.1360.40:FF:000001">
    <property type="entry name" value="Ribosome-recycling factor"/>
    <property type="match status" value="1"/>
</dbReference>
<dbReference type="Gene3D" id="3.30.1360.40">
    <property type="match status" value="1"/>
</dbReference>
<dbReference type="Gene3D" id="1.10.132.20">
    <property type="entry name" value="Ribosome-recycling factor"/>
    <property type="match status" value="1"/>
</dbReference>
<dbReference type="HAMAP" id="MF_00040">
    <property type="entry name" value="RRF"/>
    <property type="match status" value="1"/>
</dbReference>
<dbReference type="InterPro" id="IPR002661">
    <property type="entry name" value="Ribosome_recyc_fac"/>
</dbReference>
<dbReference type="InterPro" id="IPR023584">
    <property type="entry name" value="Ribosome_recyc_fac_dom"/>
</dbReference>
<dbReference type="InterPro" id="IPR036191">
    <property type="entry name" value="RRF_sf"/>
</dbReference>
<dbReference type="NCBIfam" id="TIGR00496">
    <property type="entry name" value="frr"/>
    <property type="match status" value="1"/>
</dbReference>
<dbReference type="PANTHER" id="PTHR20982:SF3">
    <property type="entry name" value="MITOCHONDRIAL RIBOSOME RECYCLING FACTOR PSEUDO 1"/>
    <property type="match status" value="1"/>
</dbReference>
<dbReference type="PANTHER" id="PTHR20982">
    <property type="entry name" value="RIBOSOME RECYCLING FACTOR"/>
    <property type="match status" value="1"/>
</dbReference>
<dbReference type="Pfam" id="PF01765">
    <property type="entry name" value="RRF"/>
    <property type="match status" value="1"/>
</dbReference>
<dbReference type="SUPFAM" id="SSF55194">
    <property type="entry name" value="Ribosome recycling factor, RRF"/>
    <property type="match status" value="1"/>
</dbReference>
<proteinExistence type="inferred from homology"/>
<evidence type="ECO:0000255" key="1">
    <source>
        <dbReference type="HAMAP-Rule" id="MF_00040"/>
    </source>
</evidence>
<keyword id="KW-0007">Acetylation</keyword>
<keyword id="KW-0963">Cytoplasm</keyword>
<keyword id="KW-0648">Protein biosynthesis</keyword>
<keyword id="KW-1185">Reference proteome</keyword>
<accession>Q3Z5I6</accession>
<organism>
    <name type="scientific">Shigella sonnei (strain Ss046)</name>
    <dbReference type="NCBI Taxonomy" id="300269"/>
    <lineage>
        <taxon>Bacteria</taxon>
        <taxon>Pseudomonadati</taxon>
        <taxon>Pseudomonadota</taxon>
        <taxon>Gammaproteobacteria</taxon>
        <taxon>Enterobacterales</taxon>
        <taxon>Enterobacteriaceae</taxon>
        <taxon>Shigella</taxon>
    </lineage>
</organism>
<sequence length="185" mass="20639">MISDIRKDAEVRMDKCVEAFKTQISKIRTGRASPSLLDGIVVEYYGTPTPLRQLASVTVEDSRTLKINVFDRSMSPAVEKAIMASDLGLNPNSAGSDIRVPLPPLTEERRKDLTKIVRGEAEQARVAVRNVRRDANDKVKALLKDKEISEDDDRRSQDDVQKLTDAAIKKIEAALADKEAELMQF</sequence>
<feature type="chain" id="PRO_1000003269" description="Ribosome-recycling factor">
    <location>
        <begin position="1"/>
        <end position="185"/>
    </location>
</feature>
<feature type="modified residue" description="N6-acetyllysine" evidence="1">
    <location>
        <position position="162"/>
    </location>
</feature>
<gene>
    <name evidence="1" type="primary">frr</name>
    <name type="ordered locus">SSON_0184</name>
</gene>
<name>RRF_SHISS</name>
<comment type="function">
    <text evidence="1">Responsible for the release of ribosomes from messenger RNA at the termination of protein biosynthesis. May increase the efficiency of translation by recycling ribosomes from one round of translation to another.</text>
</comment>
<comment type="subcellular location">
    <subcellularLocation>
        <location evidence="1">Cytoplasm</location>
    </subcellularLocation>
</comment>
<comment type="similarity">
    <text evidence="1">Belongs to the RRF family.</text>
</comment>
<protein>
    <recommendedName>
        <fullName evidence="1">Ribosome-recycling factor</fullName>
        <shortName evidence="1">RRF</shortName>
    </recommendedName>
    <alternativeName>
        <fullName evidence="1">Ribosome-releasing factor</fullName>
    </alternativeName>
</protein>